<accession>P21767</accession>
<sequence length="141" mass="15111">VLSPADKTNVKAAWGKVGGHAGEYGAEALERMFLSFPTTKTYFPHFDLSHGSAQVKGHGKKVADALTLAVGHVDDMPQALSALSDLHAHKLRVDPVNFKLLSHCLLVTLAAHLPAEFTPAVHASLDKFLASVSTVLTSKYR</sequence>
<name>HBA_MACFA</name>
<reference key="1">
    <citation type="journal article" date="1988" name="J. Mol. Evol.">
        <title>Novel hemoglobin components and their amino acid sequences from the crab-eating macaque (Macaca fascicularis).</title>
        <authorList>
            <person name="Takenaka A."/>
            <person name="Takahashi K."/>
            <person name="Takenaka O."/>
        </authorList>
    </citation>
    <scope>PROTEIN SEQUENCE</scope>
</reference>
<feature type="chain" id="PRO_0000052678" description="Hemoglobin subunit alpha-A/Q/R/T">
    <location>
        <begin position="1"/>
        <end position="141"/>
    </location>
</feature>
<feature type="domain" description="Globin" evidence="3">
    <location>
        <begin position="1"/>
        <end position="141"/>
    </location>
</feature>
<feature type="binding site" evidence="3">
    <location>
        <position position="58"/>
    </location>
    <ligand>
        <name>O2</name>
        <dbReference type="ChEBI" id="CHEBI:15379"/>
    </ligand>
</feature>
<feature type="binding site" description="proximal binding residue" evidence="3">
    <location>
        <position position="87"/>
    </location>
    <ligand>
        <name>heme b</name>
        <dbReference type="ChEBI" id="CHEBI:60344"/>
    </ligand>
    <ligandPart>
        <name>Fe</name>
        <dbReference type="ChEBI" id="CHEBI:18248"/>
    </ligandPart>
</feature>
<feature type="modified residue" description="Phosphoserine" evidence="2">
    <location>
        <position position="3"/>
    </location>
</feature>
<feature type="modified residue" description="N6-succinyllysine" evidence="1">
    <location>
        <position position="7"/>
    </location>
</feature>
<feature type="modified residue" description="Phosphothreonine" evidence="2">
    <location>
        <position position="8"/>
    </location>
</feature>
<feature type="modified residue" description="N6-succinyllysine" evidence="1">
    <location>
        <position position="11"/>
    </location>
</feature>
<feature type="modified residue" description="N6-acetyllysine; alternate" evidence="2">
    <location>
        <position position="16"/>
    </location>
</feature>
<feature type="modified residue" description="N6-succinyllysine; alternate" evidence="1">
    <location>
        <position position="16"/>
    </location>
</feature>
<feature type="modified residue" description="Phosphotyrosine" evidence="2">
    <location>
        <position position="24"/>
    </location>
</feature>
<feature type="modified residue" description="Phosphoserine" evidence="2">
    <location>
        <position position="35"/>
    </location>
</feature>
<feature type="modified residue" description="N6-succinyllysine" evidence="1">
    <location>
        <position position="40"/>
    </location>
</feature>
<feature type="modified residue" description="Phosphoserine" evidence="2">
    <location>
        <position position="49"/>
    </location>
</feature>
<feature type="modified residue" description="Phosphoserine" evidence="1">
    <location>
        <position position="102"/>
    </location>
</feature>
<feature type="modified residue" description="Phosphothreonine" evidence="1">
    <location>
        <position position="108"/>
    </location>
</feature>
<feature type="modified residue" description="Phosphoserine" evidence="1">
    <location>
        <position position="124"/>
    </location>
</feature>
<feature type="modified residue" description="Phosphoserine" evidence="1">
    <location>
        <position position="131"/>
    </location>
</feature>
<feature type="modified residue" description="Phosphothreonine" evidence="1">
    <location>
        <position position="134"/>
    </location>
</feature>
<feature type="modified residue" description="Phosphothreonine" evidence="1">
    <location>
        <position position="137"/>
    </location>
</feature>
<feature type="modified residue" description="Phosphoserine" evidence="1">
    <location>
        <position position="138"/>
    </location>
</feature>
<feature type="sequence variant" description="In alpha-R.">
    <original>T</original>
    <variation>S</variation>
    <location>
        <position position="8"/>
    </location>
</feature>
<feature type="sequence variant" description="In alpha-R.">
    <original>V</original>
    <variation>I</variation>
    <location>
        <position position="55"/>
    </location>
</feature>
<feature type="sequence variant" description="In alpha-Q.">
    <original>G</original>
    <variation>D</variation>
    <location>
        <position position="71"/>
    </location>
</feature>
<feature type="sequence variant" description="In alpha-R and alpha-T.">
    <original>Q</original>
    <variation>H</variation>
    <location>
        <position position="78"/>
    </location>
</feature>
<evidence type="ECO:0000250" key="1">
    <source>
        <dbReference type="UniProtKB" id="P01942"/>
    </source>
</evidence>
<evidence type="ECO:0000250" key="2">
    <source>
        <dbReference type="UniProtKB" id="P69905"/>
    </source>
</evidence>
<evidence type="ECO:0000255" key="3">
    <source>
        <dbReference type="PROSITE-ProRule" id="PRU00238"/>
    </source>
</evidence>
<proteinExistence type="evidence at protein level"/>
<keyword id="KW-0007">Acetylation</keyword>
<keyword id="KW-0903">Direct protein sequencing</keyword>
<keyword id="KW-0349">Heme</keyword>
<keyword id="KW-0408">Iron</keyword>
<keyword id="KW-0479">Metal-binding</keyword>
<keyword id="KW-0561">Oxygen transport</keyword>
<keyword id="KW-0597">Phosphoprotein</keyword>
<keyword id="KW-1185">Reference proteome</keyword>
<keyword id="KW-0813">Transport</keyword>
<comment type="function">
    <text>Involved in oxygen transport from the lung to the various peripheral tissues.</text>
</comment>
<comment type="subunit">
    <text>Heterotetramer of two alpha chains and two beta chains.</text>
</comment>
<comment type="tissue specificity">
    <text>Red blood cells.</text>
</comment>
<comment type="miscellaneous">
    <text>The sequence shown is that of alpha-A.</text>
</comment>
<comment type="similarity">
    <text evidence="3">Belongs to the globin family.</text>
</comment>
<protein>
    <recommendedName>
        <fullName>Hemoglobin subunit alpha-A/Q/R/T</fullName>
    </recommendedName>
    <alternativeName>
        <fullName>Alpha-A/Q/R/T-globin</fullName>
    </alternativeName>
    <alternativeName>
        <fullName>Hemoglobin alpha-A/Q/R/T chain</fullName>
    </alternativeName>
</protein>
<organism>
    <name type="scientific">Macaca fascicularis</name>
    <name type="common">Crab-eating macaque</name>
    <name type="synonym">Cynomolgus monkey</name>
    <dbReference type="NCBI Taxonomy" id="9541"/>
    <lineage>
        <taxon>Eukaryota</taxon>
        <taxon>Metazoa</taxon>
        <taxon>Chordata</taxon>
        <taxon>Craniata</taxon>
        <taxon>Vertebrata</taxon>
        <taxon>Euteleostomi</taxon>
        <taxon>Mammalia</taxon>
        <taxon>Eutheria</taxon>
        <taxon>Euarchontoglires</taxon>
        <taxon>Primates</taxon>
        <taxon>Haplorrhini</taxon>
        <taxon>Catarrhini</taxon>
        <taxon>Cercopithecidae</taxon>
        <taxon>Cercopithecinae</taxon>
        <taxon>Macaca</taxon>
    </lineage>
</organism>
<dbReference type="SMR" id="P21767"/>
<dbReference type="STRING" id="9541.ENSMFAP00000033411"/>
<dbReference type="eggNOG" id="KOG3378">
    <property type="taxonomic scope" value="Eukaryota"/>
</dbReference>
<dbReference type="Proteomes" id="UP000233100">
    <property type="component" value="Unplaced"/>
</dbReference>
<dbReference type="GO" id="GO:0072562">
    <property type="term" value="C:blood microparticle"/>
    <property type="evidence" value="ECO:0007669"/>
    <property type="project" value="TreeGrafter"/>
</dbReference>
<dbReference type="GO" id="GO:0031838">
    <property type="term" value="C:haptoglobin-hemoglobin complex"/>
    <property type="evidence" value="ECO:0007669"/>
    <property type="project" value="TreeGrafter"/>
</dbReference>
<dbReference type="GO" id="GO:0005833">
    <property type="term" value="C:hemoglobin complex"/>
    <property type="evidence" value="ECO:0007669"/>
    <property type="project" value="InterPro"/>
</dbReference>
<dbReference type="GO" id="GO:0031720">
    <property type="term" value="F:haptoglobin binding"/>
    <property type="evidence" value="ECO:0007669"/>
    <property type="project" value="TreeGrafter"/>
</dbReference>
<dbReference type="GO" id="GO:0020037">
    <property type="term" value="F:heme binding"/>
    <property type="evidence" value="ECO:0007669"/>
    <property type="project" value="InterPro"/>
</dbReference>
<dbReference type="GO" id="GO:0005506">
    <property type="term" value="F:iron ion binding"/>
    <property type="evidence" value="ECO:0007669"/>
    <property type="project" value="InterPro"/>
</dbReference>
<dbReference type="GO" id="GO:0043177">
    <property type="term" value="F:organic acid binding"/>
    <property type="evidence" value="ECO:0007669"/>
    <property type="project" value="TreeGrafter"/>
</dbReference>
<dbReference type="GO" id="GO:0019825">
    <property type="term" value="F:oxygen binding"/>
    <property type="evidence" value="ECO:0007669"/>
    <property type="project" value="InterPro"/>
</dbReference>
<dbReference type="GO" id="GO:0005344">
    <property type="term" value="F:oxygen carrier activity"/>
    <property type="evidence" value="ECO:0007669"/>
    <property type="project" value="UniProtKB-KW"/>
</dbReference>
<dbReference type="GO" id="GO:0004601">
    <property type="term" value="F:peroxidase activity"/>
    <property type="evidence" value="ECO:0007669"/>
    <property type="project" value="TreeGrafter"/>
</dbReference>
<dbReference type="GO" id="GO:0042744">
    <property type="term" value="P:hydrogen peroxide catabolic process"/>
    <property type="evidence" value="ECO:0007669"/>
    <property type="project" value="TreeGrafter"/>
</dbReference>
<dbReference type="CDD" id="cd08927">
    <property type="entry name" value="Hb-alpha-like"/>
    <property type="match status" value="1"/>
</dbReference>
<dbReference type="FunFam" id="1.10.490.10:FF:000002">
    <property type="entry name" value="Hemoglobin subunit alpha"/>
    <property type="match status" value="1"/>
</dbReference>
<dbReference type="Gene3D" id="1.10.490.10">
    <property type="entry name" value="Globins"/>
    <property type="match status" value="1"/>
</dbReference>
<dbReference type="InterPro" id="IPR000971">
    <property type="entry name" value="Globin"/>
</dbReference>
<dbReference type="InterPro" id="IPR009050">
    <property type="entry name" value="Globin-like_sf"/>
</dbReference>
<dbReference type="InterPro" id="IPR012292">
    <property type="entry name" value="Globin/Proto"/>
</dbReference>
<dbReference type="InterPro" id="IPR002338">
    <property type="entry name" value="Hemoglobin_a-typ"/>
</dbReference>
<dbReference type="InterPro" id="IPR050056">
    <property type="entry name" value="Hemoglobin_oxygen_transport"/>
</dbReference>
<dbReference type="InterPro" id="IPR002339">
    <property type="entry name" value="Hemoglobin_pi"/>
</dbReference>
<dbReference type="PANTHER" id="PTHR11442">
    <property type="entry name" value="HEMOGLOBIN FAMILY MEMBER"/>
    <property type="match status" value="1"/>
</dbReference>
<dbReference type="PANTHER" id="PTHR11442:SF48">
    <property type="entry name" value="HEMOGLOBIN SUBUNIT ALPHA"/>
    <property type="match status" value="1"/>
</dbReference>
<dbReference type="Pfam" id="PF00042">
    <property type="entry name" value="Globin"/>
    <property type="match status" value="1"/>
</dbReference>
<dbReference type="PRINTS" id="PR00612">
    <property type="entry name" value="ALPHAHAEM"/>
</dbReference>
<dbReference type="PRINTS" id="PR00815">
    <property type="entry name" value="PIHAEM"/>
</dbReference>
<dbReference type="SUPFAM" id="SSF46458">
    <property type="entry name" value="Globin-like"/>
    <property type="match status" value="1"/>
</dbReference>
<dbReference type="PROSITE" id="PS01033">
    <property type="entry name" value="GLOBIN"/>
    <property type="match status" value="1"/>
</dbReference>